<sequence length="400" mass="43778">MTYQAPDENGFYGKFGGRFVPETLMKAVKELDEAYRASKTDPAFQKELNYYLKEYVGRETPLYFAEQLTAHAGGAKIYLKREDLNHTGAHKINNTIGQALLARQMGKQKVVAETGAGQHGVATATVAALFNMECTIFMGEEDVKRQSLNVFRMELLGAKVVSVKAGSRTLKDAVNEALRFWVANVEDTHYIMGSVLGPHPFPEIVRDYQSVIGIEARKQHLEKEGKLPDAIVACVGGGSNAMGLFYPFVDDVSVQMHGVEAAGHGLETEFHAATISKGEIGILHGAMMDVLQDENGQILEAFSISAGLDYPGIGPEHSFFRDLGRAAYHSVTDDEAVEAFQLLCRTEGIIPALESSHAISYAVKLASQMRPEESMVVCLSGRGDKDVNQLKERLEGQTND</sequence>
<accession>B8DHB4</accession>
<proteinExistence type="inferred from homology"/>
<gene>
    <name evidence="1" type="primary">trpB</name>
    <name type="ordered locus">LMHCC_0934</name>
</gene>
<dbReference type="EC" id="4.2.1.20" evidence="1"/>
<dbReference type="EMBL" id="CP001175">
    <property type="protein sequence ID" value="ACK39283.1"/>
    <property type="molecule type" value="Genomic_DNA"/>
</dbReference>
<dbReference type="RefSeq" id="WP_003727351.1">
    <property type="nucleotide sequence ID" value="NC_011660.1"/>
</dbReference>
<dbReference type="SMR" id="B8DHB4"/>
<dbReference type="KEGG" id="lmh:LMHCC_0934"/>
<dbReference type="HOGENOM" id="CLU_016734_3_1_9"/>
<dbReference type="UniPathway" id="UPA00035">
    <property type="reaction ID" value="UER00044"/>
</dbReference>
<dbReference type="GO" id="GO:0005737">
    <property type="term" value="C:cytoplasm"/>
    <property type="evidence" value="ECO:0007669"/>
    <property type="project" value="TreeGrafter"/>
</dbReference>
<dbReference type="GO" id="GO:0004834">
    <property type="term" value="F:tryptophan synthase activity"/>
    <property type="evidence" value="ECO:0007669"/>
    <property type="project" value="UniProtKB-UniRule"/>
</dbReference>
<dbReference type="CDD" id="cd06446">
    <property type="entry name" value="Trp-synth_B"/>
    <property type="match status" value="1"/>
</dbReference>
<dbReference type="FunFam" id="3.40.50.1100:FF:000001">
    <property type="entry name" value="Tryptophan synthase beta chain"/>
    <property type="match status" value="1"/>
</dbReference>
<dbReference type="FunFam" id="3.40.50.1100:FF:000004">
    <property type="entry name" value="Tryptophan synthase beta chain"/>
    <property type="match status" value="1"/>
</dbReference>
<dbReference type="Gene3D" id="3.40.50.1100">
    <property type="match status" value="2"/>
</dbReference>
<dbReference type="HAMAP" id="MF_00133">
    <property type="entry name" value="Trp_synth_beta"/>
    <property type="match status" value="1"/>
</dbReference>
<dbReference type="InterPro" id="IPR006653">
    <property type="entry name" value="Trp_synth_b_CS"/>
</dbReference>
<dbReference type="InterPro" id="IPR006654">
    <property type="entry name" value="Trp_synth_beta"/>
</dbReference>
<dbReference type="InterPro" id="IPR023026">
    <property type="entry name" value="Trp_synth_beta/beta-like"/>
</dbReference>
<dbReference type="InterPro" id="IPR001926">
    <property type="entry name" value="TrpB-like_PALP"/>
</dbReference>
<dbReference type="InterPro" id="IPR036052">
    <property type="entry name" value="TrpB-like_PALP_sf"/>
</dbReference>
<dbReference type="NCBIfam" id="TIGR00263">
    <property type="entry name" value="trpB"/>
    <property type="match status" value="1"/>
</dbReference>
<dbReference type="PANTHER" id="PTHR48077:SF3">
    <property type="entry name" value="TRYPTOPHAN SYNTHASE"/>
    <property type="match status" value="1"/>
</dbReference>
<dbReference type="PANTHER" id="PTHR48077">
    <property type="entry name" value="TRYPTOPHAN SYNTHASE-RELATED"/>
    <property type="match status" value="1"/>
</dbReference>
<dbReference type="Pfam" id="PF00291">
    <property type="entry name" value="PALP"/>
    <property type="match status" value="1"/>
</dbReference>
<dbReference type="PIRSF" id="PIRSF001413">
    <property type="entry name" value="Trp_syn_beta"/>
    <property type="match status" value="1"/>
</dbReference>
<dbReference type="SUPFAM" id="SSF53686">
    <property type="entry name" value="Tryptophan synthase beta subunit-like PLP-dependent enzymes"/>
    <property type="match status" value="1"/>
</dbReference>
<dbReference type="PROSITE" id="PS00168">
    <property type="entry name" value="TRP_SYNTHASE_BETA"/>
    <property type="match status" value="1"/>
</dbReference>
<comment type="function">
    <text evidence="1">The beta subunit is responsible for the synthesis of L-tryptophan from indole and L-serine.</text>
</comment>
<comment type="catalytic activity">
    <reaction evidence="1">
        <text>(1S,2R)-1-C-(indol-3-yl)glycerol 3-phosphate + L-serine = D-glyceraldehyde 3-phosphate + L-tryptophan + H2O</text>
        <dbReference type="Rhea" id="RHEA:10532"/>
        <dbReference type="ChEBI" id="CHEBI:15377"/>
        <dbReference type="ChEBI" id="CHEBI:33384"/>
        <dbReference type="ChEBI" id="CHEBI:57912"/>
        <dbReference type="ChEBI" id="CHEBI:58866"/>
        <dbReference type="ChEBI" id="CHEBI:59776"/>
        <dbReference type="EC" id="4.2.1.20"/>
    </reaction>
</comment>
<comment type="cofactor">
    <cofactor evidence="1">
        <name>pyridoxal 5'-phosphate</name>
        <dbReference type="ChEBI" id="CHEBI:597326"/>
    </cofactor>
</comment>
<comment type="pathway">
    <text evidence="1">Amino-acid biosynthesis; L-tryptophan biosynthesis; L-tryptophan from chorismate: step 5/5.</text>
</comment>
<comment type="subunit">
    <text evidence="1">Tetramer of two alpha and two beta chains.</text>
</comment>
<comment type="similarity">
    <text evidence="1">Belongs to the TrpB family.</text>
</comment>
<keyword id="KW-0028">Amino-acid biosynthesis</keyword>
<keyword id="KW-0057">Aromatic amino acid biosynthesis</keyword>
<keyword id="KW-0456">Lyase</keyword>
<keyword id="KW-0663">Pyridoxal phosphate</keyword>
<keyword id="KW-0822">Tryptophan biosynthesis</keyword>
<evidence type="ECO:0000255" key="1">
    <source>
        <dbReference type="HAMAP-Rule" id="MF_00133"/>
    </source>
</evidence>
<feature type="chain" id="PRO_1000198746" description="Tryptophan synthase beta chain">
    <location>
        <begin position="1"/>
        <end position="400"/>
    </location>
</feature>
<feature type="modified residue" description="N6-(pyridoxal phosphate)lysine" evidence="1">
    <location>
        <position position="91"/>
    </location>
</feature>
<name>TRPB_LISMH</name>
<organism>
    <name type="scientific">Listeria monocytogenes serotype 4a (strain HCC23)</name>
    <dbReference type="NCBI Taxonomy" id="552536"/>
    <lineage>
        <taxon>Bacteria</taxon>
        <taxon>Bacillati</taxon>
        <taxon>Bacillota</taxon>
        <taxon>Bacilli</taxon>
        <taxon>Bacillales</taxon>
        <taxon>Listeriaceae</taxon>
        <taxon>Listeria</taxon>
    </lineage>
</organism>
<reference key="1">
    <citation type="journal article" date="2011" name="J. Bacteriol.">
        <title>Genome sequence of lineage III Listeria monocytogenes strain HCC23.</title>
        <authorList>
            <person name="Steele C.L."/>
            <person name="Donaldson J.R."/>
            <person name="Paul D."/>
            <person name="Banes M.M."/>
            <person name="Arick T."/>
            <person name="Bridges S.M."/>
            <person name="Lawrence M.L."/>
        </authorList>
    </citation>
    <scope>NUCLEOTIDE SEQUENCE [LARGE SCALE GENOMIC DNA]</scope>
    <source>
        <strain>HCC23</strain>
    </source>
</reference>
<protein>
    <recommendedName>
        <fullName evidence="1">Tryptophan synthase beta chain</fullName>
        <ecNumber evidence="1">4.2.1.20</ecNumber>
    </recommendedName>
</protein>